<sequence>MQTSGLTLEPPGVASPATLAVAAVTFLTALVLYELFTYRKRRSMPPGPFRWPFIGNTLQIPQVHPWLTYSRWAQVYGDILHLDALGQHIIVINSAKIARELLDKRSAIYSGRPHLVMAGDLAGQDRLLILQPYGDEFRQQRRFISQDLSVAAVRRYYDIQEAAARRLVLGVINDPGSLESQIKVNIASIIMLVTYGYTVKGTDDPFITRPFEVMDNFNASMTPGVWIVDMIPQLKYLPLWTPGATFLKTAKVWRKHLFTTNWMVYSWSKESSENGTARVPNLCASVLTEMEGKVTPQLEESLMWAAGTVLGGGLDTNISTILSFILAMLRFPDVQRKAQVEIDAVVGSERLPEISDRPSLPYIRSVVTEVYRWLPAIPLCIPHALTEDDVYNGVFLPKGSVVMPNVWHMLHDPTIYPDPDAFKPERYGGLDSEMKKVTDLAFGFGRRACPGYQFAQGTIFTIVATMLATCDIVPVVDEHGQNSIPDVGYTTGTIIFPVDVKCTFRPRTEQARAALVEASVL</sequence>
<proteinExistence type="evidence at protein level"/>
<dbReference type="EC" id="1.-.-.-" evidence="4"/>
<dbReference type="EMBL" id="AB573307">
    <property type="protein sequence ID" value="BAK09440.1"/>
    <property type="molecule type" value="mRNA"/>
</dbReference>
<dbReference type="SMR" id="F1SY96"/>
<dbReference type="GlyCosmos" id="F1SY96">
    <property type="glycosylation" value="3 sites, No reported glycans"/>
</dbReference>
<dbReference type="GO" id="GO:0016020">
    <property type="term" value="C:membrane"/>
    <property type="evidence" value="ECO:0007669"/>
    <property type="project" value="UniProtKB-SubCell"/>
</dbReference>
<dbReference type="GO" id="GO:0020037">
    <property type="term" value="F:heme binding"/>
    <property type="evidence" value="ECO:0007669"/>
    <property type="project" value="InterPro"/>
</dbReference>
<dbReference type="GO" id="GO:0005506">
    <property type="term" value="F:iron ion binding"/>
    <property type="evidence" value="ECO:0007669"/>
    <property type="project" value="InterPro"/>
</dbReference>
<dbReference type="GO" id="GO:0004497">
    <property type="term" value="F:monooxygenase activity"/>
    <property type="evidence" value="ECO:0007669"/>
    <property type="project" value="UniProtKB-KW"/>
</dbReference>
<dbReference type="GO" id="GO:0016705">
    <property type="term" value="F:oxidoreductase activity, acting on paired donors, with incorporation or reduction of molecular oxygen"/>
    <property type="evidence" value="ECO:0007669"/>
    <property type="project" value="InterPro"/>
</dbReference>
<dbReference type="CDD" id="cd11065">
    <property type="entry name" value="CYP64-like"/>
    <property type="match status" value="1"/>
</dbReference>
<dbReference type="Gene3D" id="1.10.630.10">
    <property type="entry name" value="Cytochrome P450"/>
    <property type="match status" value="1"/>
</dbReference>
<dbReference type="InterPro" id="IPR001128">
    <property type="entry name" value="Cyt_P450"/>
</dbReference>
<dbReference type="InterPro" id="IPR017972">
    <property type="entry name" value="Cyt_P450_CS"/>
</dbReference>
<dbReference type="InterPro" id="IPR002401">
    <property type="entry name" value="Cyt_P450_E_grp-I"/>
</dbReference>
<dbReference type="InterPro" id="IPR036396">
    <property type="entry name" value="Cyt_P450_sf"/>
</dbReference>
<dbReference type="InterPro" id="IPR050364">
    <property type="entry name" value="Cytochrome_P450_fung"/>
</dbReference>
<dbReference type="PANTHER" id="PTHR46300:SF7">
    <property type="entry name" value="P450, PUTATIVE (EUROFUNG)-RELATED"/>
    <property type="match status" value="1"/>
</dbReference>
<dbReference type="PANTHER" id="PTHR46300">
    <property type="entry name" value="P450, PUTATIVE (EUROFUNG)-RELATED-RELATED"/>
    <property type="match status" value="1"/>
</dbReference>
<dbReference type="Pfam" id="PF00067">
    <property type="entry name" value="p450"/>
    <property type="match status" value="1"/>
</dbReference>
<dbReference type="PRINTS" id="PR00463">
    <property type="entry name" value="EP450I"/>
</dbReference>
<dbReference type="SUPFAM" id="SSF48264">
    <property type="entry name" value="Cytochrome P450"/>
    <property type="match status" value="1"/>
</dbReference>
<dbReference type="PROSITE" id="PS00086">
    <property type="entry name" value="CYTOCHROME_P450"/>
    <property type="match status" value="1"/>
</dbReference>
<reference key="1">
    <citation type="journal article" date="2012" name="Arch. Microbiol.">
        <title>Molecular identification and functional characterization of cytochrome P450 monooxygenases from the brown-rot basidiomycete Postia placenta.</title>
        <authorList>
            <person name="Ide M."/>
            <person name="Ichinose H."/>
            <person name="Wariishi H."/>
        </authorList>
    </citation>
    <scope>NUCLEOTIDE SEQUENCE [MRNA]</scope>
    <scope>IDENTIFICATION</scope>
    <scope>FUNCTION</scope>
    <scope>CATALYTIC ACTIVITY</scope>
    <source>
        <strain>ATCC 44394 / Madison 698-R</strain>
    </source>
</reference>
<keyword id="KW-0325">Glycoprotein</keyword>
<keyword id="KW-0349">Heme</keyword>
<keyword id="KW-0408">Iron</keyword>
<keyword id="KW-0472">Membrane</keyword>
<keyword id="KW-0479">Metal-binding</keyword>
<keyword id="KW-0503">Monooxygenase</keyword>
<keyword id="KW-0560">Oxidoreductase</keyword>
<keyword id="KW-0812">Transmembrane</keyword>
<keyword id="KW-1133">Transmembrane helix</keyword>
<protein>
    <recommendedName>
        <fullName evidence="5">Cytochrome P450 monooxygenase 105</fullName>
        <ecNumber evidence="4">1.-.-.-</ecNumber>
    </recommendedName>
</protein>
<gene>
    <name evidence="5" type="primary">CYP105</name>
</gene>
<accession>F1SY96</accession>
<evidence type="ECO:0000250" key="1">
    <source>
        <dbReference type="UniProtKB" id="P04798"/>
    </source>
</evidence>
<evidence type="ECO:0000255" key="2"/>
<evidence type="ECO:0000255" key="3">
    <source>
        <dbReference type="PROSITE-ProRule" id="PRU00498"/>
    </source>
</evidence>
<evidence type="ECO:0000269" key="4">
    <source>
    </source>
</evidence>
<evidence type="ECO:0000303" key="5">
    <source>
    </source>
</evidence>
<evidence type="ECO:0000305" key="6"/>
<evidence type="ECO:0000305" key="7">
    <source>
    </source>
</evidence>
<comment type="function">
    <text evidence="4 7">Cytochrome P450 monooxygenase that is able to use anthracene, carbazole, pyrene, phenanthrene and trans-stilbene as substrates for oxidation (PubMed:21938516). These multifunctional properties against a series of polycyclic aromatic hydrocarbons (PAHs) suggest that CYP105 would play important roles, at least in part, in fungal metabolic systems involved in xenobiotic detoxification (Probable).</text>
</comment>
<comment type="cofactor">
    <cofactor evidence="1">
        <name>heme</name>
        <dbReference type="ChEBI" id="CHEBI:30413"/>
    </cofactor>
</comment>
<comment type="pathway">
    <text evidence="6">Secondary metabolite biosynthesis.</text>
</comment>
<comment type="subcellular location">
    <subcellularLocation>
        <location evidence="2">Membrane</location>
        <topology evidence="2">Single-pass membrane protein</topology>
    </subcellularLocation>
</comment>
<comment type="similarity">
    <text evidence="6">Belongs to the cytochrome P450 family.</text>
</comment>
<organism>
    <name type="scientific">Postia placenta (strain ATCC 44394 / Madison 698-R)</name>
    <name type="common">Brown rot fungus</name>
    <name type="synonym">Poria monticola</name>
    <dbReference type="NCBI Taxonomy" id="561896"/>
    <lineage>
        <taxon>Eukaryota</taxon>
        <taxon>Fungi</taxon>
        <taxon>Dikarya</taxon>
        <taxon>Basidiomycota</taxon>
        <taxon>Agaricomycotina</taxon>
        <taxon>Agaricomycetes</taxon>
        <taxon>Polyporales</taxon>
        <taxon>Adustoporiaceae</taxon>
        <taxon>Rhodonia</taxon>
    </lineage>
</organism>
<name>CY105_POSPM</name>
<feature type="chain" id="PRO_0000451370" description="Cytochrome P450 monooxygenase 105">
    <location>
        <begin position="1"/>
        <end position="521"/>
    </location>
</feature>
<feature type="transmembrane region" description="Helical" evidence="2">
    <location>
        <begin position="12"/>
        <end position="32"/>
    </location>
</feature>
<feature type="binding site" description="axial binding residue" evidence="1">
    <location>
        <position position="449"/>
    </location>
    <ligand>
        <name>heme</name>
        <dbReference type="ChEBI" id="CHEBI:30413"/>
    </ligand>
    <ligandPart>
        <name>Fe</name>
        <dbReference type="ChEBI" id="CHEBI:18248"/>
    </ligandPart>
</feature>
<feature type="glycosylation site" description="N-linked (GlcNAc...) asparagine" evidence="3">
    <location>
        <position position="218"/>
    </location>
</feature>
<feature type="glycosylation site" description="N-linked (GlcNAc...) asparagine" evidence="3">
    <location>
        <position position="274"/>
    </location>
</feature>
<feature type="glycosylation site" description="N-linked (GlcNAc...) asparagine" evidence="3">
    <location>
        <position position="317"/>
    </location>
</feature>